<name>SYD_THETH</name>
<evidence type="ECO:0000255" key="1">
    <source>
        <dbReference type="HAMAP-Rule" id="MF_00044"/>
    </source>
</evidence>
<evidence type="ECO:0000269" key="2">
    <source>
    </source>
</evidence>
<evidence type="ECO:0000269" key="3">
    <source>
    </source>
</evidence>
<evidence type="ECO:0007829" key="4">
    <source>
        <dbReference type="PDB" id="1G51"/>
    </source>
</evidence>
<evidence type="ECO:0007829" key="5">
    <source>
        <dbReference type="PDB" id="1L0W"/>
    </source>
</evidence>
<dbReference type="EC" id="6.1.1.12"/>
<dbReference type="EMBL" id="X70943">
    <property type="protein sequence ID" value="CAA50282.1"/>
    <property type="molecule type" value="Genomic_DNA"/>
</dbReference>
<dbReference type="RefSeq" id="WP_011172809.1">
    <property type="nucleotide sequence ID" value="NZ_DFSU01000110.1"/>
</dbReference>
<dbReference type="PDB" id="1EFW">
    <property type="method" value="X-ray"/>
    <property type="resolution" value="3.00 A"/>
    <property type="chains" value="A/B=1-580"/>
</dbReference>
<dbReference type="PDB" id="1G51">
    <property type="method" value="X-ray"/>
    <property type="resolution" value="2.40 A"/>
    <property type="chains" value="A/B=1-580"/>
</dbReference>
<dbReference type="PDB" id="1L0W">
    <property type="method" value="X-ray"/>
    <property type="resolution" value="2.01 A"/>
    <property type="chains" value="A/B=1-580"/>
</dbReference>
<dbReference type="PDBsum" id="1EFW"/>
<dbReference type="PDBsum" id="1G51"/>
<dbReference type="PDBsum" id="1L0W"/>
<dbReference type="SMR" id="P36419"/>
<dbReference type="DrugBank" id="DB01895">
    <property type="generic name" value="Aspartyl-Adenosine-5'-Monophosphate"/>
</dbReference>
<dbReference type="GeneID" id="3169335"/>
<dbReference type="OMA" id="LCGWVDR"/>
<dbReference type="BRENDA" id="6.1.1.12">
    <property type="organism ID" value="2305"/>
</dbReference>
<dbReference type="SABIO-RK" id="P36419"/>
<dbReference type="EvolutionaryTrace" id="P36419"/>
<dbReference type="GO" id="GO:0005737">
    <property type="term" value="C:cytoplasm"/>
    <property type="evidence" value="ECO:0007669"/>
    <property type="project" value="UniProtKB-SubCell"/>
</dbReference>
<dbReference type="GO" id="GO:0004815">
    <property type="term" value="F:aspartate-tRNA ligase activity"/>
    <property type="evidence" value="ECO:0007669"/>
    <property type="project" value="UniProtKB-UniRule"/>
</dbReference>
<dbReference type="GO" id="GO:0005524">
    <property type="term" value="F:ATP binding"/>
    <property type="evidence" value="ECO:0007669"/>
    <property type="project" value="UniProtKB-UniRule"/>
</dbReference>
<dbReference type="GO" id="GO:0003676">
    <property type="term" value="F:nucleic acid binding"/>
    <property type="evidence" value="ECO:0007669"/>
    <property type="project" value="InterPro"/>
</dbReference>
<dbReference type="GO" id="GO:0006422">
    <property type="term" value="P:aspartyl-tRNA aminoacylation"/>
    <property type="evidence" value="ECO:0007669"/>
    <property type="project" value="UniProtKB-UniRule"/>
</dbReference>
<dbReference type="CDD" id="cd00777">
    <property type="entry name" value="AspRS_core"/>
    <property type="match status" value="1"/>
</dbReference>
<dbReference type="CDD" id="cd04317">
    <property type="entry name" value="EcAspRS_like_N"/>
    <property type="match status" value="1"/>
</dbReference>
<dbReference type="Gene3D" id="3.30.930.10">
    <property type="entry name" value="Bira Bifunctional Protein, Domain 2"/>
    <property type="match status" value="1"/>
</dbReference>
<dbReference type="Gene3D" id="3.30.1360.30">
    <property type="entry name" value="GAD-like domain"/>
    <property type="match status" value="1"/>
</dbReference>
<dbReference type="Gene3D" id="2.40.50.140">
    <property type="entry name" value="Nucleic acid-binding proteins"/>
    <property type="match status" value="1"/>
</dbReference>
<dbReference type="HAMAP" id="MF_00044">
    <property type="entry name" value="Asp_tRNA_synth_type1"/>
    <property type="match status" value="1"/>
</dbReference>
<dbReference type="InterPro" id="IPR004364">
    <property type="entry name" value="Aa-tRNA-synt_II"/>
</dbReference>
<dbReference type="InterPro" id="IPR006195">
    <property type="entry name" value="aa-tRNA-synth_II"/>
</dbReference>
<dbReference type="InterPro" id="IPR045864">
    <property type="entry name" value="aa-tRNA-synth_II/BPL/LPL"/>
</dbReference>
<dbReference type="InterPro" id="IPR004524">
    <property type="entry name" value="Asp-tRNA-ligase_1"/>
</dbReference>
<dbReference type="InterPro" id="IPR047089">
    <property type="entry name" value="Asp-tRNA-ligase_1_N"/>
</dbReference>
<dbReference type="InterPro" id="IPR002312">
    <property type="entry name" value="Asp/Asn-tRNA-synth_IIb"/>
</dbReference>
<dbReference type="InterPro" id="IPR047090">
    <property type="entry name" value="AspRS_core"/>
</dbReference>
<dbReference type="InterPro" id="IPR004115">
    <property type="entry name" value="GAD-like_sf"/>
</dbReference>
<dbReference type="InterPro" id="IPR029351">
    <property type="entry name" value="GAD_dom"/>
</dbReference>
<dbReference type="InterPro" id="IPR012340">
    <property type="entry name" value="NA-bd_OB-fold"/>
</dbReference>
<dbReference type="InterPro" id="IPR004365">
    <property type="entry name" value="NA-bd_OB_tRNA"/>
</dbReference>
<dbReference type="NCBIfam" id="TIGR00459">
    <property type="entry name" value="aspS_bact"/>
    <property type="match status" value="1"/>
</dbReference>
<dbReference type="NCBIfam" id="NF001750">
    <property type="entry name" value="PRK00476.1"/>
    <property type="match status" value="1"/>
</dbReference>
<dbReference type="PANTHER" id="PTHR22594:SF5">
    <property type="entry name" value="ASPARTATE--TRNA LIGASE, MITOCHONDRIAL"/>
    <property type="match status" value="1"/>
</dbReference>
<dbReference type="PANTHER" id="PTHR22594">
    <property type="entry name" value="ASPARTYL/LYSYL-TRNA SYNTHETASE"/>
    <property type="match status" value="1"/>
</dbReference>
<dbReference type="Pfam" id="PF02938">
    <property type="entry name" value="GAD"/>
    <property type="match status" value="1"/>
</dbReference>
<dbReference type="Pfam" id="PF00152">
    <property type="entry name" value="tRNA-synt_2"/>
    <property type="match status" value="1"/>
</dbReference>
<dbReference type="Pfam" id="PF01336">
    <property type="entry name" value="tRNA_anti-codon"/>
    <property type="match status" value="1"/>
</dbReference>
<dbReference type="PRINTS" id="PR01042">
    <property type="entry name" value="TRNASYNTHASP"/>
</dbReference>
<dbReference type="SUPFAM" id="SSF55681">
    <property type="entry name" value="Class II aaRS and biotin synthetases"/>
    <property type="match status" value="1"/>
</dbReference>
<dbReference type="SUPFAM" id="SSF55261">
    <property type="entry name" value="GAD domain-like"/>
    <property type="match status" value="1"/>
</dbReference>
<dbReference type="SUPFAM" id="SSF50249">
    <property type="entry name" value="Nucleic acid-binding proteins"/>
    <property type="match status" value="1"/>
</dbReference>
<dbReference type="PROSITE" id="PS50862">
    <property type="entry name" value="AA_TRNA_LIGASE_II"/>
    <property type="match status" value="1"/>
</dbReference>
<keyword id="KW-0002">3D-structure</keyword>
<keyword id="KW-0030">Aminoacyl-tRNA synthetase</keyword>
<keyword id="KW-0067">ATP-binding</keyword>
<keyword id="KW-0963">Cytoplasm</keyword>
<keyword id="KW-0903">Direct protein sequencing</keyword>
<keyword id="KW-0436">Ligase</keyword>
<keyword id="KW-0547">Nucleotide-binding</keyword>
<keyword id="KW-0648">Protein biosynthesis</keyword>
<proteinExistence type="evidence at protein level"/>
<comment type="function">
    <text evidence="1">Catalyzes the attachment of L-aspartate to tRNA(Asp) in a two-step reaction: L-aspartate is first activated by ATP to form Asp-AMP and then transferred to the acceptor end of tRNA(Asp).</text>
</comment>
<comment type="catalytic activity">
    <reaction evidence="1">
        <text>tRNA(Asp) + L-aspartate + ATP = L-aspartyl-tRNA(Asp) + AMP + diphosphate</text>
        <dbReference type="Rhea" id="RHEA:19649"/>
        <dbReference type="Rhea" id="RHEA-COMP:9660"/>
        <dbReference type="Rhea" id="RHEA-COMP:9678"/>
        <dbReference type="ChEBI" id="CHEBI:29991"/>
        <dbReference type="ChEBI" id="CHEBI:30616"/>
        <dbReference type="ChEBI" id="CHEBI:33019"/>
        <dbReference type="ChEBI" id="CHEBI:78442"/>
        <dbReference type="ChEBI" id="CHEBI:78516"/>
        <dbReference type="ChEBI" id="CHEBI:456215"/>
        <dbReference type="EC" id="6.1.1.12"/>
    </reaction>
</comment>
<comment type="subunit">
    <text evidence="1 2 3">Homodimer.</text>
</comment>
<comment type="subcellular location">
    <subcellularLocation>
        <location evidence="1">Cytoplasm</location>
    </subcellularLocation>
</comment>
<comment type="similarity">
    <text evidence="1">Belongs to the class-II aminoacyl-tRNA synthetase family. Type 1 subfamily.</text>
</comment>
<reference key="1">
    <citation type="journal article" date="1993" name="FEBS Lett.">
        <title>Sequence, overproduction and crystallization of aspartyl-tRNA synthetase from Thermus thermophilus. Implications for the structure of prokaryotic aspartyl-tRNA synthetases.</title>
        <authorList>
            <person name="Poterszman A."/>
            <person name="Plateau P."/>
            <person name="Moras D."/>
            <person name="Blanquet S."/>
            <person name="Mazuric M.-H."/>
            <person name="Kreutzer R."/>
            <person name="Kern D."/>
        </authorList>
    </citation>
    <scope>NUCLEOTIDE SEQUENCE [GENOMIC DNA]</scope>
    <scope>PARTIAL PROTEIN SEQUENCE</scope>
    <source>
        <strain>VK1</strain>
    </source>
</reference>
<reference key="2">
    <citation type="journal article" date="1994" name="EMBO J.">
        <title>Crystal structure of a prokaryotic aspartyl tRNA-synthetase.</title>
        <authorList>
            <person name="Delarue M."/>
            <person name="Poterszman A."/>
            <person name="Nikonov S."/>
            <person name="Garber M."/>
            <person name="Moras D."/>
            <person name="Thierry J.-C."/>
        </authorList>
    </citation>
    <scope>X-RAY CRYSTALLOGRAPHY (2.5 ANGSTROMS)</scope>
</reference>
<reference key="3">
    <citation type="journal article" date="1994" name="J. Mol. Biol.">
        <title>Synthesis and recognition of aspartyl-adenylate by Thermus thermophilus aspartyl-tRNA synthetase.</title>
        <authorList>
            <person name="Poterszman A."/>
            <person name="Delarue M."/>
            <person name="Thierry J.C."/>
            <person name="Moras D."/>
        </authorList>
    </citation>
    <scope>X-RAY CRYSTALLOGRAPHY (2.40 ANGSTROMS) IN COMPLEX WITH AMP AND ASPARTYL-AMP</scope>
</reference>
<reference key="4">
    <citation type="journal article" date="2000" name="J. Mol. Biol.">
        <title>An intermediate step in the recognition of tRNA(Asp) by aspartyl-tRNA synthetase.</title>
        <authorList>
            <person name="Briand C."/>
            <person name="Poterszman A."/>
            <person name="Eiler S."/>
            <person name="Webster G."/>
            <person name="Thierry J.-C."/>
            <person name="Moras D."/>
        </authorList>
    </citation>
    <scope>X-RAY CRYSTALLOGRAPHY (3.0 ANGSTROMS) IN COMPLEX WITH TRNA(ASP)</scope>
</reference>
<reference key="5">
    <citation type="journal article" date="2002" name="Acta Crystallogr. D">
        <title>Comparative analysis of space-grown and earth-grown crystals of an aminoacyl-tRNA synthetase: space-grown crystals are more useful for structural determination.</title>
        <authorList>
            <person name="Ng J.D."/>
            <person name="Sauter C."/>
            <person name="Lorber B."/>
            <person name="Kirkland N."/>
            <person name="Arnez J."/>
            <person name="Giege R."/>
        </authorList>
    </citation>
    <scope>X-RAY CRYSTALLOGRAPHY (2.01 ANGSTROMS)</scope>
</reference>
<protein>
    <recommendedName>
        <fullName>Aspartate--tRNA(Asp) ligase</fullName>
        <ecNumber>6.1.1.12</ecNumber>
    </recommendedName>
    <alternativeName>
        <fullName>Aspartyl-tRNA synthetase</fullName>
        <shortName>AspRS</shortName>
    </alternativeName>
    <alternativeName>
        <fullName>Discriminating aspartyl-tRNA synthetase</fullName>
        <shortName>D-AspRS</shortName>
    </alternativeName>
</protein>
<sequence length="580" mass="66030">MRRTHYAGSLRETHVGEEVVLEGWVNRRRDLGGLIFLDLRDREGLVQLVAHPASPAYATAERVRPEWVVRAKGLVRLRPEPNPRLATGRVEVELSALEVLAEAKTPPFPVDAGWRGEEEKEASEELRLKYRYLDLRRRRMQENLRLRHRVIKAIWDFLDREGFVQVETPFLTKSTPEGARDFLVPYRHEPGLFYALPQSPQLFKQMLMVAGLDRYFQIARCFRDEDLRADRQPDFTQLDLEMSFVEVEDVLELNERLMAHVFREALGVELPLPFPRLSYEEAMERYGSDKPDLRFGLELKEVGPLFRQSGFRVFQEAESVKALALPKALSRKEVAELEEVAKRHKAQGLAWARVEEGGFSGGVAKFLEPVREALLQATEARPGDTLLFVAGPRKVAATALGAVRLRAADLLGLKREGFRFLWVVDFPLLEWDEEEEAWTYMHHPFTSPHPEDLPLLEKDPGRVRALAYDLVLNGVEVGGGSIRIHDPRLQARVFRLLGIGEEEQREKFGFFLEALEYGAPPHGGIAWGLDRLLALMTGSPSIREVIAFPKNKEGKDPLTGAPSPVPEEQLRELGLMVVRP</sequence>
<organism>
    <name type="scientific">Thermus thermophilus</name>
    <dbReference type="NCBI Taxonomy" id="274"/>
    <lineage>
        <taxon>Bacteria</taxon>
        <taxon>Thermotogati</taxon>
        <taxon>Deinococcota</taxon>
        <taxon>Deinococci</taxon>
        <taxon>Thermales</taxon>
        <taxon>Thermaceae</taxon>
        <taxon>Thermus</taxon>
    </lineage>
</organism>
<accession>P36419</accession>
<gene>
    <name type="primary">aspS</name>
</gene>
<feature type="chain" id="PRO_0000110971" description="Aspartate--tRNA(Asp) ligase">
    <location>
        <begin position="1"/>
        <end position="580"/>
    </location>
</feature>
<feature type="region of interest" description="Aspartate" evidence="1">
    <location>
        <begin position="201"/>
        <end position="204"/>
    </location>
</feature>
<feature type="binding site" evidence="1">
    <location>
        <position position="177"/>
    </location>
    <ligand>
        <name>L-aspartate</name>
        <dbReference type="ChEBI" id="CHEBI:29991"/>
    </ligand>
</feature>
<feature type="binding site" evidence="1">
    <location>
        <begin position="223"/>
        <end position="225"/>
    </location>
    <ligand>
        <name>ATP</name>
        <dbReference type="ChEBI" id="CHEBI:30616"/>
    </ligand>
</feature>
<feature type="binding site" evidence="1">
    <location>
        <position position="223"/>
    </location>
    <ligand>
        <name>L-aspartate</name>
        <dbReference type="ChEBI" id="CHEBI:29991"/>
    </ligand>
</feature>
<feature type="binding site" evidence="1">
    <location>
        <position position="232"/>
    </location>
    <ligand>
        <name>ATP</name>
        <dbReference type="ChEBI" id="CHEBI:30616"/>
    </ligand>
</feature>
<feature type="binding site" evidence="1">
    <location>
        <position position="442"/>
    </location>
    <ligand>
        <name>L-aspartate</name>
        <dbReference type="ChEBI" id="CHEBI:29991"/>
    </ligand>
</feature>
<feature type="binding site" evidence="1">
    <location>
        <position position="476"/>
    </location>
    <ligand>
        <name>ATP</name>
        <dbReference type="ChEBI" id="CHEBI:30616"/>
    </ligand>
</feature>
<feature type="binding site" evidence="1">
    <location>
        <position position="483"/>
    </location>
    <ligand>
        <name>L-aspartate</name>
        <dbReference type="ChEBI" id="CHEBI:29991"/>
    </ligand>
</feature>
<feature type="binding site" evidence="1">
    <location>
        <begin position="528"/>
        <end position="531"/>
    </location>
    <ligand>
        <name>ATP</name>
        <dbReference type="ChEBI" id="CHEBI:30616"/>
    </ligand>
</feature>
<feature type="helix" evidence="5">
    <location>
        <begin position="7"/>
        <end position="9"/>
    </location>
</feature>
<feature type="helix" evidence="5">
    <location>
        <begin position="12"/>
        <end position="14"/>
    </location>
</feature>
<feature type="strand" evidence="5">
    <location>
        <begin position="18"/>
        <end position="30"/>
    </location>
</feature>
<feature type="strand" evidence="5">
    <location>
        <begin position="35"/>
        <end position="41"/>
    </location>
</feature>
<feature type="strand" evidence="5">
    <location>
        <begin position="44"/>
        <end position="50"/>
    </location>
</feature>
<feature type="strand" evidence="4">
    <location>
        <begin position="52"/>
        <end position="54"/>
    </location>
</feature>
<feature type="helix" evidence="5">
    <location>
        <begin position="57"/>
        <end position="60"/>
    </location>
</feature>
<feature type="strand" evidence="5">
    <location>
        <begin position="68"/>
        <end position="77"/>
    </location>
</feature>
<feature type="turn" evidence="5">
    <location>
        <begin position="86"/>
        <end position="89"/>
    </location>
</feature>
<feature type="strand" evidence="5">
    <location>
        <begin position="90"/>
        <end position="101"/>
    </location>
</feature>
<feature type="helix" evidence="5">
    <location>
        <begin position="113"/>
        <end position="115"/>
    </location>
</feature>
<feature type="helix" evidence="5">
    <location>
        <begin position="124"/>
        <end position="129"/>
    </location>
</feature>
<feature type="helix" evidence="5">
    <location>
        <begin position="131"/>
        <end position="134"/>
    </location>
</feature>
<feature type="helix" evidence="5">
    <location>
        <begin position="138"/>
        <end position="160"/>
    </location>
</feature>
<feature type="strand" evidence="5">
    <location>
        <begin position="170"/>
        <end position="172"/>
    </location>
</feature>
<feature type="strand" evidence="5">
    <location>
        <begin position="176"/>
        <end position="179"/>
    </location>
</feature>
<feature type="strand" evidence="5">
    <location>
        <begin position="183"/>
        <end position="185"/>
    </location>
</feature>
<feature type="strand" evidence="5">
    <location>
        <begin position="192"/>
        <end position="195"/>
    </location>
</feature>
<feature type="helix" evidence="5">
    <location>
        <begin position="201"/>
        <end position="209"/>
    </location>
</feature>
<feature type="strand" evidence="5">
    <location>
        <begin position="213"/>
        <end position="222"/>
    </location>
</feature>
<feature type="strand" evidence="5">
    <location>
        <begin position="233"/>
        <end position="244"/>
    </location>
</feature>
<feature type="helix" evidence="5">
    <location>
        <begin position="247"/>
        <end position="265"/>
    </location>
</feature>
<feature type="strand" evidence="5">
    <location>
        <begin position="276"/>
        <end position="278"/>
    </location>
</feature>
<feature type="helix" evidence="5">
    <location>
        <begin position="279"/>
        <end position="286"/>
    </location>
</feature>
<feature type="strand" evidence="5">
    <location>
        <begin position="287"/>
        <end position="290"/>
    </location>
</feature>
<feature type="helix" evidence="5">
    <location>
        <begin position="303"/>
        <end position="306"/>
    </location>
</feature>
<feature type="strand" evidence="5">
    <location>
        <begin position="307"/>
        <end position="309"/>
    </location>
</feature>
<feature type="helix" evidence="5">
    <location>
        <begin position="313"/>
        <end position="316"/>
    </location>
</feature>
<feature type="strand" evidence="5">
    <location>
        <begin position="317"/>
        <end position="327"/>
    </location>
</feature>
<feature type="helix" evidence="5">
    <location>
        <begin position="331"/>
        <end position="343"/>
    </location>
</feature>
<feature type="strand" evidence="5">
    <location>
        <begin position="350"/>
        <end position="355"/>
    </location>
</feature>
<feature type="strand" evidence="5">
    <location>
        <begin position="358"/>
        <end position="361"/>
    </location>
</feature>
<feature type="helix" evidence="5">
    <location>
        <begin position="364"/>
        <end position="367"/>
    </location>
</feature>
<feature type="helix" evidence="5">
    <location>
        <begin position="368"/>
        <end position="370"/>
    </location>
</feature>
<feature type="helix" evidence="5">
    <location>
        <begin position="371"/>
        <end position="378"/>
    </location>
</feature>
<feature type="strand" evidence="5">
    <location>
        <begin position="385"/>
        <end position="392"/>
    </location>
</feature>
<feature type="helix" evidence="5">
    <location>
        <begin position="393"/>
        <end position="410"/>
    </location>
</feature>
<feature type="strand" evidence="5">
    <location>
        <begin position="420"/>
        <end position="424"/>
    </location>
</feature>
<feature type="strand" evidence="5">
    <location>
        <begin position="427"/>
        <end position="429"/>
    </location>
</feature>
<feature type="turn" evidence="5">
    <location>
        <begin position="433"/>
        <end position="435"/>
    </location>
</feature>
<feature type="strand" evidence="5">
    <location>
        <begin position="440"/>
        <end position="442"/>
    </location>
</feature>
<feature type="turn" evidence="5">
    <location>
        <begin position="451"/>
        <end position="454"/>
    </location>
</feature>
<feature type="helix" evidence="5">
    <location>
        <begin position="455"/>
        <end position="458"/>
    </location>
</feature>
<feature type="helix" evidence="5">
    <location>
        <begin position="460"/>
        <end position="462"/>
    </location>
</feature>
<feature type="strand" evidence="5">
    <location>
        <begin position="464"/>
        <end position="472"/>
    </location>
</feature>
<feature type="strand" evidence="5">
    <location>
        <begin position="475"/>
        <end position="483"/>
    </location>
</feature>
<feature type="helix" evidence="5">
    <location>
        <begin position="487"/>
        <end position="497"/>
    </location>
</feature>
<feature type="turn" evidence="5">
    <location>
        <begin position="501"/>
        <end position="503"/>
    </location>
</feature>
<feature type="helix" evidence="5">
    <location>
        <begin position="504"/>
        <end position="507"/>
    </location>
</feature>
<feature type="helix" evidence="5">
    <location>
        <begin position="509"/>
        <end position="514"/>
    </location>
</feature>
<feature type="strand" evidence="5">
    <location>
        <begin position="522"/>
        <end position="528"/>
    </location>
</feature>
<feature type="helix" evidence="5">
    <location>
        <begin position="529"/>
        <end position="537"/>
    </location>
</feature>
<feature type="helix" evidence="5">
    <location>
        <begin position="542"/>
        <end position="545"/>
    </location>
</feature>
<feature type="strand" evidence="5">
    <location>
        <begin position="546"/>
        <end position="548"/>
    </location>
</feature>
<feature type="turn" evidence="5">
    <location>
        <begin position="557"/>
        <end position="560"/>
    </location>
</feature>
<feature type="strand" evidence="5">
    <location>
        <begin position="561"/>
        <end position="564"/>
    </location>
</feature>
<feature type="helix" evidence="5">
    <location>
        <begin position="567"/>
        <end position="572"/>
    </location>
</feature>
<feature type="strand" evidence="5">
    <location>
        <begin position="575"/>
        <end position="577"/>
    </location>
</feature>